<accession>Q32EF2</accession>
<dbReference type="EC" id="4.3.2.10" evidence="1"/>
<dbReference type="EC" id="3.5.1.2" evidence="1"/>
<dbReference type="EMBL" id="CP000034">
    <property type="protein sequence ID" value="ABB62303.1"/>
    <property type="molecule type" value="Genomic_DNA"/>
</dbReference>
<dbReference type="RefSeq" id="WP_001103560.1">
    <property type="nucleotide sequence ID" value="NC_007606.1"/>
</dbReference>
<dbReference type="RefSeq" id="YP_403794.1">
    <property type="nucleotide sequence ID" value="NC_007606.1"/>
</dbReference>
<dbReference type="SMR" id="Q32EF2"/>
<dbReference type="STRING" id="300267.SDY_2218"/>
<dbReference type="EnsemblBacteria" id="ABB62303">
    <property type="protein sequence ID" value="ABB62303"/>
    <property type="gene ID" value="SDY_2218"/>
</dbReference>
<dbReference type="GeneID" id="93775150"/>
<dbReference type="KEGG" id="sdy:SDY_2218"/>
<dbReference type="PATRIC" id="fig|300267.13.peg.2682"/>
<dbReference type="HOGENOM" id="CLU_071837_0_0_6"/>
<dbReference type="UniPathway" id="UPA00031">
    <property type="reaction ID" value="UER00010"/>
</dbReference>
<dbReference type="Proteomes" id="UP000002716">
    <property type="component" value="Chromosome"/>
</dbReference>
<dbReference type="GO" id="GO:0005737">
    <property type="term" value="C:cytoplasm"/>
    <property type="evidence" value="ECO:0007669"/>
    <property type="project" value="UniProtKB-SubCell"/>
</dbReference>
<dbReference type="GO" id="GO:0004359">
    <property type="term" value="F:glutaminase activity"/>
    <property type="evidence" value="ECO:0007669"/>
    <property type="project" value="UniProtKB-EC"/>
</dbReference>
<dbReference type="GO" id="GO:0000107">
    <property type="term" value="F:imidazoleglycerol-phosphate synthase activity"/>
    <property type="evidence" value="ECO:0007669"/>
    <property type="project" value="UniProtKB-UniRule"/>
</dbReference>
<dbReference type="GO" id="GO:0016829">
    <property type="term" value="F:lyase activity"/>
    <property type="evidence" value="ECO:0007669"/>
    <property type="project" value="UniProtKB-KW"/>
</dbReference>
<dbReference type="GO" id="GO:0000105">
    <property type="term" value="P:L-histidine biosynthetic process"/>
    <property type="evidence" value="ECO:0007669"/>
    <property type="project" value="UniProtKB-UniRule"/>
</dbReference>
<dbReference type="CDD" id="cd01748">
    <property type="entry name" value="GATase1_IGP_Synthase"/>
    <property type="match status" value="1"/>
</dbReference>
<dbReference type="FunFam" id="3.40.50.880:FF:000009">
    <property type="entry name" value="Imidazole glycerol phosphate synthase subunit HisH"/>
    <property type="match status" value="1"/>
</dbReference>
<dbReference type="Gene3D" id="3.40.50.880">
    <property type="match status" value="1"/>
</dbReference>
<dbReference type="HAMAP" id="MF_00278">
    <property type="entry name" value="HisH"/>
    <property type="match status" value="1"/>
</dbReference>
<dbReference type="InterPro" id="IPR029062">
    <property type="entry name" value="Class_I_gatase-like"/>
</dbReference>
<dbReference type="InterPro" id="IPR017926">
    <property type="entry name" value="GATASE"/>
</dbReference>
<dbReference type="InterPro" id="IPR010139">
    <property type="entry name" value="Imidazole-glycPsynth_HisH"/>
</dbReference>
<dbReference type="NCBIfam" id="TIGR01855">
    <property type="entry name" value="IMP_synth_hisH"/>
    <property type="match status" value="1"/>
</dbReference>
<dbReference type="PANTHER" id="PTHR42701">
    <property type="entry name" value="IMIDAZOLE GLYCEROL PHOSPHATE SYNTHASE SUBUNIT HISH"/>
    <property type="match status" value="1"/>
</dbReference>
<dbReference type="PANTHER" id="PTHR42701:SF1">
    <property type="entry name" value="IMIDAZOLE GLYCEROL PHOSPHATE SYNTHASE SUBUNIT HISH"/>
    <property type="match status" value="1"/>
</dbReference>
<dbReference type="Pfam" id="PF00117">
    <property type="entry name" value="GATase"/>
    <property type="match status" value="1"/>
</dbReference>
<dbReference type="PIRSF" id="PIRSF000495">
    <property type="entry name" value="Amidotransf_hisH"/>
    <property type="match status" value="1"/>
</dbReference>
<dbReference type="PRINTS" id="PR00096">
    <property type="entry name" value="GATASE"/>
</dbReference>
<dbReference type="SUPFAM" id="SSF52317">
    <property type="entry name" value="Class I glutamine amidotransferase-like"/>
    <property type="match status" value="1"/>
</dbReference>
<dbReference type="PROSITE" id="PS51273">
    <property type="entry name" value="GATASE_TYPE_1"/>
    <property type="match status" value="1"/>
</dbReference>
<keyword id="KW-0028">Amino-acid biosynthesis</keyword>
<keyword id="KW-0963">Cytoplasm</keyword>
<keyword id="KW-0315">Glutamine amidotransferase</keyword>
<keyword id="KW-0368">Histidine biosynthesis</keyword>
<keyword id="KW-0378">Hydrolase</keyword>
<keyword id="KW-0456">Lyase</keyword>
<keyword id="KW-1185">Reference proteome</keyword>
<feature type="chain" id="PRO_0000231758" description="Imidazole glycerol phosphate synthase subunit HisH">
    <location>
        <begin position="1"/>
        <end position="196"/>
    </location>
</feature>
<feature type="domain" description="Glutamine amidotransferase type-1" evidence="1">
    <location>
        <begin position="2"/>
        <end position="196"/>
    </location>
</feature>
<feature type="active site" description="Nucleophile" evidence="1">
    <location>
        <position position="77"/>
    </location>
</feature>
<feature type="active site" evidence="1">
    <location>
        <position position="178"/>
    </location>
</feature>
<feature type="active site" evidence="1">
    <location>
        <position position="180"/>
    </location>
</feature>
<name>HIS5_SHIDS</name>
<evidence type="ECO:0000255" key="1">
    <source>
        <dbReference type="HAMAP-Rule" id="MF_00278"/>
    </source>
</evidence>
<gene>
    <name evidence="1" type="primary">hisH</name>
    <name type="ordered locus">SDY_2218</name>
</gene>
<protein>
    <recommendedName>
        <fullName evidence="1">Imidazole glycerol phosphate synthase subunit HisH</fullName>
        <ecNumber evidence="1">4.3.2.10</ecNumber>
    </recommendedName>
    <alternativeName>
        <fullName evidence="1">IGP synthase glutaminase subunit</fullName>
        <ecNumber evidence="1">3.5.1.2</ecNumber>
    </alternativeName>
    <alternativeName>
        <fullName evidence="1">IGP synthase subunit HisH</fullName>
    </alternativeName>
    <alternativeName>
        <fullName evidence="1">ImGP synthase subunit HisH</fullName>
        <shortName evidence="1">IGPS subunit HisH</shortName>
    </alternativeName>
</protein>
<reference key="1">
    <citation type="journal article" date="2005" name="Nucleic Acids Res.">
        <title>Genome dynamics and diversity of Shigella species, the etiologic agents of bacillary dysentery.</title>
        <authorList>
            <person name="Yang F."/>
            <person name="Yang J."/>
            <person name="Zhang X."/>
            <person name="Chen L."/>
            <person name="Jiang Y."/>
            <person name="Yan Y."/>
            <person name="Tang X."/>
            <person name="Wang J."/>
            <person name="Xiong Z."/>
            <person name="Dong J."/>
            <person name="Xue Y."/>
            <person name="Zhu Y."/>
            <person name="Xu X."/>
            <person name="Sun L."/>
            <person name="Chen S."/>
            <person name="Nie H."/>
            <person name="Peng J."/>
            <person name="Xu J."/>
            <person name="Wang Y."/>
            <person name="Yuan Z."/>
            <person name="Wen Y."/>
            <person name="Yao Z."/>
            <person name="Shen Y."/>
            <person name="Qiang B."/>
            <person name="Hou Y."/>
            <person name="Yu J."/>
            <person name="Jin Q."/>
        </authorList>
    </citation>
    <scope>NUCLEOTIDE SEQUENCE [LARGE SCALE GENOMIC DNA]</scope>
    <source>
        <strain>Sd197</strain>
    </source>
</reference>
<organism>
    <name type="scientific">Shigella dysenteriae serotype 1 (strain Sd197)</name>
    <dbReference type="NCBI Taxonomy" id="300267"/>
    <lineage>
        <taxon>Bacteria</taxon>
        <taxon>Pseudomonadati</taxon>
        <taxon>Pseudomonadota</taxon>
        <taxon>Gammaproteobacteria</taxon>
        <taxon>Enterobacterales</taxon>
        <taxon>Enterobacteriaceae</taxon>
        <taxon>Shigella</taxon>
    </lineage>
</organism>
<proteinExistence type="inferred from homology"/>
<comment type="function">
    <text evidence="1">IGPS catalyzes the conversion of PRFAR and glutamine to IGP, AICAR and glutamate. The HisH subunit catalyzes the hydrolysis of glutamine to glutamate and ammonia as part of the synthesis of IGP and AICAR. The resulting ammonia molecule is channeled to the active site of HisF.</text>
</comment>
<comment type="catalytic activity">
    <reaction evidence="1">
        <text>5-[(5-phospho-1-deoxy-D-ribulos-1-ylimino)methylamino]-1-(5-phospho-beta-D-ribosyl)imidazole-4-carboxamide + L-glutamine = D-erythro-1-(imidazol-4-yl)glycerol 3-phosphate + 5-amino-1-(5-phospho-beta-D-ribosyl)imidazole-4-carboxamide + L-glutamate + H(+)</text>
        <dbReference type="Rhea" id="RHEA:24793"/>
        <dbReference type="ChEBI" id="CHEBI:15378"/>
        <dbReference type="ChEBI" id="CHEBI:29985"/>
        <dbReference type="ChEBI" id="CHEBI:58278"/>
        <dbReference type="ChEBI" id="CHEBI:58359"/>
        <dbReference type="ChEBI" id="CHEBI:58475"/>
        <dbReference type="ChEBI" id="CHEBI:58525"/>
        <dbReference type="EC" id="4.3.2.10"/>
    </reaction>
</comment>
<comment type="catalytic activity">
    <reaction evidence="1">
        <text>L-glutamine + H2O = L-glutamate + NH4(+)</text>
        <dbReference type="Rhea" id="RHEA:15889"/>
        <dbReference type="ChEBI" id="CHEBI:15377"/>
        <dbReference type="ChEBI" id="CHEBI:28938"/>
        <dbReference type="ChEBI" id="CHEBI:29985"/>
        <dbReference type="ChEBI" id="CHEBI:58359"/>
        <dbReference type="EC" id="3.5.1.2"/>
    </reaction>
</comment>
<comment type="pathway">
    <text evidence="1">Amino-acid biosynthesis; L-histidine biosynthesis; L-histidine from 5-phospho-alpha-D-ribose 1-diphosphate: step 5/9.</text>
</comment>
<comment type="subunit">
    <text evidence="1">Heterodimer of HisH and HisF.</text>
</comment>
<comment type="subcellular location">
    <subcellularLocation>
        <location evidence="1">Cytoplasm</location>
    </subcellularLocation>
</comment>
<sequence>MNVVILDTGCANLNSVKSAIARHGYEPKVSRDPDVVLLADKLFLPGVGTAQAAMDQVRERELFDLIKACTQPVLGICLGMQLLGRRSEESNGVDLLGIIDEDVPKMTDFGLPLPHMGWNRVYPQAGNRLFQGIEDGAYFYFVHSYAMPVNPWTIAQCNYGEPFTAAVQKDNFYGVQFHPERSGAAGAKLLKNFLEM</sequence>